<protein>
    <recommendedName>
        <fullName evidence="1">Small ribosomal subunit protein uS5</fullName>
    </recommendedName>
    <alternativeName>
        <fullName evidence="2">30S ribosomal protein S5</fullName>
    </alternativeName>
</protein>
<proteinExistence type="inferred from homology"/>
<comment type="function">
    <text evidence="1">With S4 and S12 plays an important role in translational accuracy.</text>
</comment>
<comment type="function">
    <text evidence="1">Located at the back of the 30S subunit body where it stabilizes the conformation of the head with respect to the body.</text>
</comment>
<comment type="subunit">
    <text evidence="1">Part of the 30S ribosomal subunit. Contacts proteins S4 and S8.</text>
</comment>
<comment type="domain">
    <text>The N-terminal domain interacts with the head of the 30S subunit; the C-terminal domain interacts with the body and contacts protein S4. The interaction surface between S4 and S5 is involved in control of translational fidelity.</text>
</comment>
<comment type="similarity">
    <text evidence="1">Belongs to the universal ribosomal protein uS5 family.</text>
</comment>
<organism>
    <name type="scientific">Citrobacter koseri (strain ATCC BAA-895 / CDC 4225-83 / SGSC4696)</name>
    <dbReference type="NCBI Taxonomy" id="290338"/>
    <lineage>
        <taxon>Bacteria</taxon>
        <taxon>Pseudomonadati</taxon>
        <taxon>Pseudomonadota</taxon>
        <taxon>Gammaproteobacteria</taxon>
        <taxon>Enterobacterales</taxon>
        <taxon>Enterobacteriaceae</taxon>
        <taxon>Citrobacter</taxon>
    </lineage>
</organism>
<keyword id="KW-1185">Reference proteome</keyword>
<keyword id="KW-0687">Ribonucleoprotein</keyword>
<keyword id="KW-0689">Ribosomal protein</keyword>
<keyword id="KW-0694">RNA-binding</keyword>
<keyword id="KW-0699">rRNA-binding</keyword>
<dbReference type="EMBL" id="CP000822">
    <property type="protein sequence ID" value="ABV15761.1"/>
    <property type="molecule type" value="Genomic_DNA"/>
</dbReference>
<dbReference type="RefSeq" id="WP_000940121.1">
    <property type="nucleotide sequence ID" value="NC_009792.1"/>
</dbReference>
<dbReference type="SMR" id="A8AQJ8"/>
<dbReference type="STRING" id="290338.CKO_04716"/>
<dbReference type="GeneID" id="93778684"/>
<dbReference type="KEGG" id="cko:CKO_04716"/>
<dbReference type="HOGENOM" id="CLU_065898_2_2_6"/>
<dbReference type="OrthoDB" id="9809045at2"/>
<dbReference type="Proteomes" id="UP000008148">
    <property type="component" value="Chromosome"/>
</dbReference>
<dbReference type="GO" id="GO:0015935">
    <property type="term" value="C:small ribosomal subunit"/>
    <property type="evidence" value="ECO:0007669"/>
    <property type="project" value="InterPro"/>
</dbReference>
<dbReference type="GO" id="GO:0019843">
    <property type="term" value="F:rRNA binding"/>
    <property type="evidence" value="ECO:0007669"/>
    <property type="project" value="UniProtKB-UniRule"/>
</dbReference>
<dbReference type="GO" id="GO:0003735">
    <property type="term" value="F:structural constituent of ribosome"/>
    <property type="evidence" value="ECO:0007669"/>
    <property type="project" value="InterPro"/>
</dbReference>
<dbReference type="GO" id="GO:0006412">
    <property type="term" value="P:translation"/>
    <property type="evidence" value="ECO:0007669"/>
    <property type="project" value="UniProtKB-UniRule"/>
</dbReference>
<dbReference type="FunFam" id="3.30.160.20:FF:000001">
    <property type="entry name" value="30S ribosomal protein S5"/>
    <property type="match status" value="1"/>
</dbReference>
<dbReference type="FunFam" id="3.30.230.10:FF:000002">
    <property type="entry name" value="30S ribosomal protein S5"/>
    <property type="match status" value="1"/>
</dbReference>
<dbReference type="Gene3D" id="3.30.160.20">
    <property type="match status" value="1"/>
</dbReference>
<dbReference type="Gene3D" id="3.30.230.10">
    <property type="match status" value="1"/>
</dbReference>
<dbReference type="HAMAP" id="MF_01307_B">
    <property type="entry name" value="Ribosomal_uS5_B"/>
    <property type="match status" value="1"/>
</dbReference>
<dbReference type="InterPro" id="IPR020568">
    <property type="entry name" value="Ribosomal_Su5_D2-typ_SF"/>
</dbReference>
<dbReference type="InterPro" id="IPR000851">
    <property type="entry name" value="Ribosomal_uS5"/>
</dbReference>
<dbReference type="InterPro" id="IPR005712">
    <property type="entry name" value="Ribosomal_uS5_bac-type"/>
</dbReference>
<dbReference type="InterPro" id="IPR005324">
    <property type="entry name" value="Ribosomal_uS5_C"/>
</dbReference>
<dbReference type="InterPro" id="IPR013810">
    <property type="entry name" value="Ribosomal_uS5_N"/>
</dbReference>
<dbReference type="InterPro" id="IPR018192">
    <property type="entry name" value="Ribosomal_uS5_N_CS"/>
</dbReference>
<dbReference type="InterPro" id="IPR014721">
    <property type="entry name" value="Ribsml_uS5_D2-typ_fold_subgr"/>
</dbReference>
<dbReference type="NCBIfam" id="TIGR01021">
    <property type="entry name" value="rpsE_bact"/>
    <property type="match status" value="1"/>
</dbReference>
<dbReference type="PANTHER" id="PTHR48277">
    <property type="entry name" value="MITOCHONDRIAL RIBOSOMAL PROTEIN S5"/>
    <property type="match status" value="1"/>
</dbReference>
<dbReference type="PANTHER" id="PTHR48277:SF1">
    <property type="entry name" value="MITOCHONDRIAL RIBOSOMAL PROTEIN S5"/>
    <property type="match status" value="1"/>
</dbReference>
<dbReference type="Pfam" id="PF00333">
    <property type="entry name" value="Ribosomal_S5"/>
    <property type="match status" value="1"/>
</dbReference>
<dbReference type="Pfam" id="PF03719">
    <property type="entry name" value="Ribosomal_S5_C"/>
    <property type="match status" value="1"/>
</dbReference>
<dbReference type="SUPFAM" id="SSF54768">
    <property type="entry name" value="dsRNA-binding domain-like"/>
    <property type="match status" value="1"/>
</dbReference>
<dbReference type="SUPFAM" id="SSF54211">
    <property type="entry name" value="Ribosomal protein S5 domain 2-like"/>
    <property type="match status" value="1"/>
</dbReference>
<dbReference type="PROSITE" id="PS00585">
    <property type="entry name" value="RIBOSOMAL_S5"/>
    <property type="match status" value="1"/>
</dbReference>
<dbReference type="PROSITE" id="PS50881">
    <property type="entry name" value="S5_DSRBD"/>
    <property type="match status" value="1"/>
</dbReference>
<evidence type="ECO:0000255" key="1">
    <source>
        <dbReference type="HAMAP-Rule" id="MF_01307"/>
    </source>
</evidence>
<evidence type="ECO:0000305" key="2"/>
<name>RS5_CITK8</name>
<sequence>MAHIEKQAGELQEKLIAVNRVSKTVKGGRIFSFTALTVVGDGNGRVGFGYGKAREVPAAIQKAMEKARRNMINVALNNGTLQHPVKGVHTGSRVFMQPASEGTGIIAGGAMRAVLEVAGVHNVLAKAYGSTNPINVVRATIDGLENMNSPEMVAAKRGKSVEEILGK</sequence>
<reference key="1">
    <citation type="submission" date="2007-08" db="EMBL/GenBank/DDBJ databases">
        <authorList>
            <consortium name="The Citrobacter koseri Genome Sequencing Project"/>
            <person name="McClelland M."/>
            <person name="Sanderson E.K."/>
            <person name="Porwollik S."/>
            <person name="Spieth J."/>
            <person name="Clifton W.S."/>
            <person name="Latreille P."/>
            <person name="Courtney L."/>
            <person name="Wang C."/>
            <person name="Pepin K."/>
            <person name="Bhonagiri V."/>
            <person name="Nash W."/>
            <person name="Johnson M."/>
            <person name="Thiruvilangam P."/>
            <person name="Wilson R."/>
        </authorList>
    </citation>
    <scope>NUCLEOTIDE SEQUENCE [LARGE SCALE GENOMIC DNA]</scope>
    <source>
        <strain>ATCC BAA-895 / CDC 4225-83 / SGSC4696</strain>
    </source>
</reference>
<accession>A8AQJ8</accession>
<gene>
    <name evidence="1" type="primary">rpsE</name>
    <name type="ordered locus">CKO_04716</name>
</gene>
<feature type="chain" id="PRO_0000323106" description="Small ribosomal subunit protein uS5">
    <location>
        <begin position="1"/>
        <end position="167"/>
    </location>
</feature>
<feature type="domain" description="S5 DRBM" evidence="1">
    <location>
        <begin position="11"/>
        <end position="74"/>
    </location>
</feature>